<comment type="function">
    <text evidence="1">One of the early assembly proteins it binds 23S rRNA. One of the proteins that surrounds the polypeptide exit tunnel on the outside of the ribosome. Forms the main docking site for trigger factor binding to the ribosome.</text>
</comment>
<comment type="subunit">
    <text evidence="1">Part of the 50S ribosomal subunit. Contacts protein L29, and trigger factor when it is bound to the ribosome.</text>
</comment>
<comment type="similarity">
    <text evidence="1">Belongs to the universal ribosomal protein uL23 family.</text>
</comment>
<accession>Q63H88</accession>
<protein>
    <recommendedName>
        <fullName evidence="1">Large ribosomal subunit protein uL23</fullName>
    </recommendedName>
    <alternativeName>
        <fullName evidence="2">50S ribosomal protein L23</fullName>
    </alternativeName>
</protein>
<name>RL23_BACCZ</name>
<feature type="chain" id="PRO_0000272700" description="Large ribosomal subunit protein uL23">
    <location>
        <begin position="1"/>
        <end position="96"/>
    </location>
</feature>
<organism>
    <name type="scientific">Bacillus cereus (strain ZK / E33L)</name>
    <dbReference type="NCBI Taxonomy" id="288681"/>
    <lineage>
        <taxon>Bacteria</taxon>
        <taxon>Bacillati</taxon>
        <taxon>Bacillota</taxon>
        <taxon>Bacilli</taxon>
        <taxon>Bacillales</taxon>
        <taxon>Bacillaceae</taxon>
        <taxon>Bacillus</taxon>
        <taxon>Bacillus cereus group</taxon>
    </lineage>
</organism>
<gene>
    <name evidence="1" type="primary">rplW</name>
    <name type="ordered locus">BCE33L0106</name>
</gene>
<proteinExistence type="inferred from homology"/>
<reference key="1">
    <citation type="journal article" date="2006" name="J. Bacteriol.">
        <title>Pathogenomic sequence analysis of Bacillus cereus and Bacillus thuringiensis isolates closely related to Bacillus anthracis.</title>
        <authorList>
            <person name="Han C.S."/>
            <person name="Xie G."/>
            <person name="Challacombe J.F."/>
            <person name="Altherr M.R."/>
            <person name="Bhotika S.S."/>
            <person name="Bruce D."/>
            <person name="Campbell C.S."/>
            <person name="Campbell M.L."/>
            <person name="Chen J."/>
            <person name="Chertkov O."/>
            <person name="Cleland C."/>
            <person name="Dimitrijevic M."/>
            <person name="Doggett N.A."/>
            <person name="Fawcett J.J."/>
            <person name="Glavina T."/>
            <person name="Goodwin L.A."/>
            <person name="Hill K.K."/>
            <person name="Hitchcock P."/>
            <person name="Jackson P.J."/>
            <person name="Keim P."/>
            <person name="Kewalramani A.R."/>
            <person name="Longmire J."/>
            <person name="Lucas S."/>
            <person name="Malfatti S."/>
            <person name="McMurry K."/>
            <person name="Meincke L.J."/>
            <person name="Misra M."/>
            <person name="Moseman B.L."/>
            <person name="Mundt M."/>
            <person name="Munk A.C."/>
            <person name="Okinaka R.T."/>
            <person name="Parson-Quintana B."/>
            <person name="Reilly L.P."/>
            <person name="Richardson P."/>
            <person name="Robinson D.L."/>
            <person name="Rubin E."/>
            <person name="Saunders E."/>
            <person name="Tapia R."/>
            <person name="Tesmer J.G."/>
            <person name="Thayer N."/>
            <person name="Thompson L.S."/>
            <person name="Tice H."/>
            <person name="Ticknor L.O."/>
            <person name="Wills P.L."/>
            <person name="Brettin T.S."/>
            <person name="Gilna P."/>
        </authorList>
    </citation>
    <scope>NUCLEOTIDE SEQUENCE [LARGE SCALE GENOMIC DNA]</scope>
    <source>
        <strain>ZK / E33L</strain>
    </source>
</reference>
<keyword id="KW-0687">Ribonucleoprotein</keyword>
<keyword id="KW-0689">Ribosomal protein</keyword>
<keyword id="KW-0694">RNA-binding</keyword>
<keyword id="KW-0699">rRNA-binding</keyword>
<dbReference type="EMBL" id="CP000001">
    <property type="protein sequence ID" value="AAU20126.1"/>
    <property type="molecule type" value="Genomic_DNA"/>
</dbReference>
<dbReference type="RefSeq" id="WP_001205558.1">
    <property type="nucleotide sequence ID" value="NZ_CP009968.1"/>
</dbReference>
<dbReference type="SMR" id="Q63H88"/>
<dbReference type="GeneID" id="93010941"/>
<dbReference type="KEGG" id="bcz:BCE33L0106"/>
<dbReference type="PATRIC" id="fig|288681.22.peg.45"/>
<dbReference type="Proteomes" id="UP000002612">
    <property type="component" value="Chromosome"/>
</dbReference>
<dbReference type="GO" id="GO:1990904">
    <property type="term" value="C:ribonucleoprotein complex"/>
    <property type="evidence" value="ECO:0007669"/>
    <property type="project" value="UniProtKB-KW"/>
</dbReference>
<dbReference type="GO" id="GO:0005840">
    <property type="term" value="C:ribosome"/>
    <property type="evidence" value="ECO:0007669"/>
    <property type="project" value="UniProtKB-KW"/>
</dbReference>
<dbReference type="GO" id="GO:0019843">
    <property type="term" value="F:rRNA binding"/>
    <property type="evidence" value="ECO:0007669"/>
    <property type="project" value="UniProtKB-UniRule"/>
</dbReference>
<dbReference type="GO" id="GO:0003735">
    <property type="term" value="F:structural constituent of ribosome"/>
    <property type="evidence" value="ECO:0007669"/>
    <property type="project" value="InterPro"/>
</dbReference>
<dbReference type="GO" id="GO:0006412">
    <property type="term" value="P:translation"/>
    <property type="evidence" value="ECO:0007669"/>
    <property type="project" value="UniProtKB-UniRule"/>
</dbReference>
<dbReference type="FunFam" id="3.30.70.330:FF:000001">
    <property type="entry name" value="50S ribosomal protein L23"/>
    <property type="match status" value="1"/>
</dbReference>
<dbReference type="Gene3D" id="3.30.70.330">
    <property type="match status" value="1"/>
</dbReference>
<dbReference type="HAMAP" id="MF_01369_B">
    <property type="entry name" value="Ribosomal_uL23_B"/>
    <property type="match status" value="1"/>
</dbReference>
<dbReference type="InterPro" id="IPR012677">
    <property type="entry name" value="Nucleotide-bd_a/b_plait_sf"/>
</dbReference>
<dbReference type="InterPro" id="IPR013025">
    <property type="entry name" value="Ribosomal_uL23-like"/>
</dbReference>
<dbReference type="InterPro" id="IPR012678">
    <property type="entry name" value="Ribosomal_uL23/eL15/eS24_sf"/>
</dbReference>
<dbReference type="InterPro" id="IPR001014">
    <property type="entry name" value="Ribosomal_uL23_CS"/>
</dbReference>
<dbReference type="NCBIfam" id="NF004363">
    <property type="entry name" value="PRK05738.2-4"/>
    <property type="match status" value="1"/>
</dbReference>
<dbReference type="PANTHER" id="PTHR11620">
    <property type="entry name" value="60S RIBOSOMAL PROTEIN L23A"/>
    <property type="match status" value="1"/>
</dbReference>
<dbReference type="Pfam" id="PF00276">
    <property type="entry name" value="Ribosomal_L23"/>
    <property type="match status" value="1"/>
</dbReference>
<dbReference type="SUPFAM" id="SSF54189">
    <property type="entry name" value="Ribosomal proteins S24e, L23 and L15e"/>
    <property type="match status" value="1"/>
</dbReference>
<dbReference type="PROSITE" id="PS00050">
    <property type="entry name" value="RIBOSOMAL_L23"/>
    <property type="match status" value="1"/>
</dbReference>
<sequence length="96" mass="11114">MRDPRDIIKRPVITERSMEMMAEKKYTFDVDVKSNKTEVKDALEAIFGVKVEKVNIMNYKPKAKRVGRHAGFTSRRRKAIVKLTADSKEIEIFQGV</sequence>
<evidence type="ECO:0000255" key="1">
    <source>
        <dbReference type="HAMAP-Rule" id="MF_01369"/>
    </source>
</evidence>
<evidence type="ECO:0000305" key="2"/>